<gene>
    <name evidence="1" type="primary">rpsG</name>
    <name type="ordered locus">ECH74115_4650</name>
</gene>
<sequence length="156" mass="17604">MPRRRVIGQRKILPDPKFGSELLAKFVNILMVDGKKSTAESIVYSALETLAQRSGKSELEAFEVALENVRPTVEVKSRRVGGSTYQVPVEVRPVRRNALAMRWIVEAARKRGDKSMALRLANELSDAAENKGTAVKKREDVHRMAEANKAFAHYRW</sequence>
<feature type="chain" id="PRO_1000125937" description="Small ribosomal subunit protein uS7">
    <location>
        <begin position="1"/>
        <end position="156"/>
    </location>
</feature>
<organism>
    <name type="scientific">Escherichia coli O157:H7 (strain EC4115 / EHEC)</name>
    <dbReference type="NCBI Taxonomy" id="444450"/>
    <lineage>
        <taxon>Bacteria</taxon>
        <taxon>Pseudomonadati</taxon>
        <taxon>Pseudomonadota</taxon>
        <taxon>Gammaproteobacteria</taxon>
        <taxon>Enterobacterales</taxon>
        <taxon>Enterobacteriaceae</taxon>
        <taxon>Escherichia</taxon>
    </lineage>
</organism>
<proteinExistence type="inferred from homology"/>
<reference key="1">
    <citation type="journal article" date="2011" name="Proc. Natl. Acad. Sci. U.S.A.">
        <title>Genomic anatomy of Escherichia coli O157:H7 outbreaks.</title>
        <authorList>
            <person name="Eppinger M."/>
            <person name="Mammel M.K."/>
            <person name="Leclerc J.E."/>
            <person name="Ravel J."/>
            <person name="Cebula T.A."/>
        </authorList>
    </citation>
    <scope>NUCLEOTIDE SEQUENCE [LARGE SCALE GENOMIC DNA]</scope>
    <source>
        <strain>EC4115 / EHEC</strain>
    </source>
</reference>
<keyword id="KW-0687">Ribonucleoprotein</keyword>
<keyword id="KW-0689">Ribosomal protein</keyword>
<keyword id="KW-0694">RNA-binding</keyword>
<keyword id="KW-0699">rRNA-binding</keyword>
<keyword id="KW-0820">tRNA-binding</keyword>
<name>RS7_ECO5E</name>
<accession>B5YTP8</accession>
<evidence type="ECO:0000255" key="1">
    <source>
        <dbReference type="HAMAP-Rule" id="MF_00480"/>
    </source>
</evidence>
<evidence type="ECO:0000305" key="2"/>
<dbReference type="EMBL" id="CP001164">
    <property type="protein sequence ID" value="ACI36782.1"/>
    <property type="molecule type" value="Genomic_DNA"/>
</dbReference>
<dbReference type="RefSeq" id="WP_001138043.1">
    <property type="nucleotide sequence ID" value="NC_011353.1"/>
</dbReference>
<dbReference type="SMR" id="B5YTP8"/>
<dbReference type="GeneID" id="93778657"/>
<dbReference type="KEGG" id="ecf:ECH74115_4650"/>
<dbReference type="HOGENOM" id="CLU_072226_1_1_6"/>
<dbReference type="GO" id="GO:0015935">
    <property type="term" value="C:small ribosomal subunit"/>
    <property type="evidence" value="ECO:0007669"/>
    <property type="project" value="InterPro"/>
</dbReference>
<dbReference type="GO" id="GO:0019843">
    <property type="term" value="F:rRNA binding"/>
    <property type="evidence" value="ECO:0007669"/>
    <property type="project" value="UniProtKB-UniRule"/>
</dbReference>
<dbReference type="GO" id="GO:0003735">
    <property type="term" value="F:structural constituent of ribosome"/>
    <property type="evidence" value="ECO:0007669"/>
    <property type="project" value="InterPro"/>
</dbReference>
<dbReference type="GO" id="GO:0000049">
    <property type="term" value="F:tRNA binding"/>
    <property type="evidence" value="ECO:0007669"/>
    <property type="project" value="UniProtKB-UniRule"/>
</dbReference>
<dbReference type="GO" id="GO:0006412">
    <property type="term" value="P:translation"/>
    <property type="evidence" value="ECO:0007669"/>
    <property type="project" value="UniProtKB-UniRule"/>
</dbReference>
<dbReference type="CDD" id="cd14869">
    <property type="entry name" value="uS7_Bacteria"/>
    <property type="match status" value="1"/>
</dbReference>
<dbReference type="FunFam" id="1.10.455.10:FF:000001">
    <property type="entry name" value="30S ribosomal protein S7"/>
    <property type="match status" value="1"/>
</dbReference>
<dbReference type="Gene3D" id="1.10.455.10">
    <property type="entry name" value="Ribosomal protein S7 domain"/>
    <property type="match status" value="1"/>
</dbReference>
<dbReference type="HAMAP" id="MF_00480_B">
    <property type="entry name" value="Ribosomal_uS7_B"/>
    <property type="match status" value="1"/>
</dbReference>
<dbReference type="InterPro" id="IPR000235">
    <property type="entry name" value="Ribosomal_uS7"/>
</dbReference>
<dbReference type="InterPro" id="IPR005717">
    <property type="entry name" value="Ribosomal_uS7_bac/org-type"/>
</dbReference>
<dbReference type="InterPro" id="IPR020606">
    <property type="entry name" value="Ribosomal_uS7_CS"/>
</dbReference>
<dbReference type="InterPro" id="IPR023798">
    <property type="entry name" value="Ribosomal_uS7_dom"/>
</dbReference>
<dbReference type="InterPro" id="IPR036823">
    <property type="entry name" value="Ribosomal_uS7_dom_sf"/>
</dbReference>
<dbReference type="NCBIfam" id="TIGR01029">
    <property type="entry name" value="rpsG_bact"/>
    <property type="match status" value="1"/>
</dbReference>
<dbReference type="PANTHER" id="PTHR11205">
    <property type="entry name" value="RIBOSOMAL PROTEIN S7"/>
    <property type="match status" value="1"/>
</dbReference>
<dbReference type="Pfam" id="PF00177">
    <property type="entry name" value="Ribosomal_S7"/>
    <property type="match status" value="1"/>
</dbReference>
<dbReference type="PIRSF" id="PIRSF002122">
    <property type="entry name" value="RPS7p_RPS7a_RPS5e_RPS7o"/>
    <property type="match status" value="1"/>
</dbReference>
<dbReference type="SUPFAM" id="SSF47973">
    <property type="entry name" value="Ribosomal protein S7"/>
    <property type="match status" value="1"/>
</dbReference>
<dbReference type="PROSITE" id="PS00052">
    <property type="entry name" value="RIBOSOMAL_S7"/>
    <property type="match status" value="1"/>
</dbReference>
<comment type="function">
    <text evidence="1">One of the primary rRNA binding proteins, it binds directly to 16S rRNA where it nucleates assembly of the head domain of the 30S subunit. Is located at the subunit interface close to the decoding center, probably blocks exit of the E-site tRNA.</text>
</comment>
<comment type="subunit">
    <text evidence="1">Part of the 30S ribosomal subunit. Contacts proteins S9 and S11.</text>
</comment>
<comment type="similarity">
    <text evidence="1">Belongs to the universal ribosomal protein uS7 family.</text>
</comment>
<protein>
    <recommendedName>
        <fullName evidence="1">Small ribosomal subunit protein uS7</fullName>
    </recommendedName>
    <alternativeName>
        <fullName evidence="2">30S ribosomal protein S7</fullName>
    </alternativeName>
</protein>